<sequence length="787" mass="89318">MGSLHSIFCVCLILLCIFKENSIVGAINSARMVELRETSRRLFYHGYNNYMQFAFPNDELAPLSCEGLGPDYENPNNIGVNDVRGDYLLTLVDVLDTLVVLGDREGFQDAVDKVIHHINFERDTKVQVFEATIRILGGLLSSHIFASEEKYGFQIPLYKGELLTLATELAERLLPAFRTPTGIPFARINLMKGVAYREVTENCAAAASSLVLEFSMLTALTGNNKFKASAENAFFSVWKRRSGIGLLGNSIDVLSGRWIYPVSGVGAGIDSFYEYAFKSYIFLGDPRYLEVWQKSLESLRHYTASLNEYYYQNVYSANGMVMSRWVDSLSAYFPGLLVLAGELELAKKMHLYYFSIYLKFGQLPERYNLYTKSIELNGYPLRPEFAESTYYLYRATKDVFYLHVGELLLSNIENHLWTPCGFAAVENLEKYTLSNRMESFFLSETLKYLFLLFDDDNPIHRSHHDFIFTTEGHLFPVTNQTRLSTSQRIYDGGEVCVAEDYDRSKWPMLYSLIASRDDYDYVSHLVGIDNKAIPSYLIDPSGVCKRPEYSDGFELLYGSALVSPIKSVERVTNNVYISDIIGNKLKFVQKEGSNSLFLYTAGAESINENDTVFLTDPDYETFTRPDALYFDRTIAQLENPNSGQKTFGKFLQFDNDNSLPSKVFKTVLLNNSMCQKPSDTLDKDTAYIAPLGNCSWVQQAKNTNKAGLLILITDGEFINPLENIHSQNSLFNWVKPYIPPTILLKNENNFVSKWANVSVRQSDFDAPSYFQGTPVSNLYLCLKCINS</sequence>
<feature type="signal peptide" evidence="2">
    <location>
        <begin position="1"/>
        <end position="22"/>
    </location>
</feature>
<feature type="chain" id="PRO_0000373874" description="ER degradation-enhancing alpha-mannosidase-like protein 1">
    <location>
        <begin position="23"/>
        <end position="787"/>
    </location>
</feature>
<feature type="glycosylation site" description="N-linked (GlcNAc...) asparagine" evidence="2">
    <location>
        <position position="479"/>
    </location>
</feature>
<feature type="glycosylation site" description="N-linked (GlcNAc...) asparagine" evidence="2">
    <location>
        <position position="609"/>
    </location>
</feature>
<feature type="glycosylation site" description="N-linked (GlcNAc...) asparagine" evidence="2">
    <location>
        <position position="670"/>
    </location>
</feature>
<feature type="glycosylation site" description="N-linked (GlcNAc...) asparagine" evidence="2">
    <location>
        <position position="693"/>
    </location>
</feature>
<feature type="glycosylation site" description="N-linked (GlcNAc...) asparagine" evidence="2">
    <location>
        <position position="756"/>
    </location>
</feature>
<accession>O94726</accession>
<comment type="function">
    <text evidence="3">Alpha-mannosidase-like protein involved in endoplasmic reticulum-associated degradation (ERAD). Delivers misfolded glycoproteins to proteasomes. It lacks mannosidase activity.</text>
</comment>
<comment type="subcellular location">
    <subcellularLocation>
        <location evidence="1">Endoplasmic reticulum lumen</location>
    </subcellularLocation>
</comment>
<comment type="similarity">
    <text evidence="4">Belongs to the glycosyl hydrolase 47 family.</text>
</comment>
<evidence type="ECO:0000250" key="1"/>
<evidence type="ECO:0000255" key="2"/>
<evidence type="ECO:0000269" key="3">
    <source>
    </source>
</evidence>
<evidence type="ECO:0000305" key="4"/>
<organism>
    <name type="scientific">Schizosaccharomyces pombe (strain 972 / ATCC 24843)</name>
    <name type="common">Fission yeast</name>
    <dbReference type="NCBI Taxonomy" id="284812"/>
    <lineage>
        <taxon>Eukaryota</taxon>
        <taxon>Fungi</taxon>
        <taxon>Dikarya</taxon>
        <taxon>Ascomycota</taxon>
        <taxon>Taphrinomycotina</taxon>
        <taxon>Schizosaccharomycetes</taxon>
        <taxon>Schizosaccharomycetales</taxon>
        <taxon>Schizosaccharomycetaceae</taxon>
        <taxon>Schizosaccharomyces</taxon>
    </lineage>
</organism>
<reference key="1">
    <citation type="journal article" date="2002" name="Nature">
        <title>The genome sequence of Schizosaccharomyces pombe.</title>
        <authorList>
            <person name="Wood V."/>
            <person name="Gwilliam R."/>
            <person name="Rajandream M.A."/>
            <person name="Lyne M.H."/>
            <person name="Lyne R."/>
            <person name="Stewart A."/>
            <person name="Sgouros J.G."/>
            <person name="Peat N."/>
            <person name="Hayles J."/>
            <person name="Baker S.G."/>
            <person name="Basham D."/>
            <person name="Bowman S."/>
            <person name="Brooks K."/>
            <person name="Brown D."/>
            <person name="Brown S."/>
            <person name="Chillingworth T."/>
            <person name="Churcher C.M."/>
            <person name="Collins M."/>
            <person name="Connor R."/>
            <person name="Cronin A."/>
            <person name="Davis P."/>
            <person name="Feltwell T."/>
            <person name="Fraser A."/>
            <person name="Gentles S."/>
            <person name="Goble A."/>
            <person name="Hamlin N."/>
            <person name="Harris D.E."/>
            <person name="Hidalgo J."/>
            <person name="Hodgson G."/>
            <person name="Holroyd S."/>
            <person name="Hornsby T."/>
            <person name="Howarth S."/>
            <person name="Huckle E.J."/>
            <person name="Hunt S."/>
            <person name="Jagels K."/>
            <person name="James K.D."/>
            <person name="Jones L."/>
            <person name="Jones M."/>
            <person name="Leather S."/>
            <person name="McDonald S."/>
            <person name="McLean J."/>
            <person name="Mooney P."/>
            <person name="Moule S."/>
            <person name="Mungall K.L."/>
            <person name="Murphy L.D."/>
            <person name="Niblett D."/>
            <person name="Odell C."/>
            <person name="Oliver K."/>
            <person name="O'Neil S."/>
            <person name="Pearson D."/>
            <person name="Quail M.A."/>
            <person name="Rabbinowitsch E."/>
            <person name="Rutherford K.M."/>
            <person name="Rutter S."/>
            <person name="Saunders D."/>
            <person name="Seeger K."/>
            <person name="Sharp S."/>
            <person name="Skelton J."/>
            <person name="Simmonds M.N."/>
            <person name="Squares R."/>
            <person name="Squares S."/>
            <person name="Stevens K."/>
            <person name="Taylor K."/>
            <person name="Taylor R.G."/>
            <person name="Tivey A."/>
            <person name="Walsh S.V."/>
            <person name="Warren T."/>
            <person name="Whitehead S."/>
            <person name="Woodward J.R."/>
            <person name="Volckaert G."/>
            <person name="Aert R."/>
            <person name="Robben J."/>
            <person name="Grymonprez B."/>
            <person name="Weltjens I."/>
            <person name="Vanstreels E."/>
            <person name="Rieger M."/>
            <person name="Schaefer M."/>
            <person name="Mueller-Auer S."/>
            <person name="Gabel C."/>
            <person name="Fuchs M."/>
            <person name="Duesterhoeft A."/>
            <person name="Fritzc C."/>
            <person name="Holzer E."/>
            <person name="Moestl D."/>
            <person name="Hilbert H."/>
            <person name="Borzym K."/>
            <person name="Langer I."/>
            <person name="Beck A."/>
            <person name="Lehrach H."/>
            <person name="Reinhardt R."/>
            <person name="Pohl T.M."/>
            <person name="Eger P."/>
            <person name="Zimmermann W."/>
            <person name="Wedler H."/>
            <person name="Wambutt R."/>
            <person name="Purnelle B."/>
            <person name="Goffeau A."/>
            <person name="Cadieu E."/>
            <person name="Dreano S."/>
            <person name="Gloux S."/>
            <person name="Lelaure V."/>
            <person name="Mottier S."/>
            <person name="Galibert F."/>
            <person name="Aves S.J."/>
            <person name="Xiang Z."/>
            <person name="Hunt C."/>
            <person name="Moore K."/>
            <person name="Hurst S.M."/>
            <person name="Lucas M."/>
            <person name="Rochet M."/>
            <person name="Gaillardin C."/>
            <person name="Tallada V.A."/>
            <person name="Garzon A."/>
            <person name="Thode G."/>
            <person name="Daga R.R."/>
            <person name="Cruzado L."/>
            <person name="Jimenez J."/>
            <person name="Sanchez M."/>
            <person name="del Rey F."/>
            <person name="Benito J."/>
            <person name="Dominguez A."/>
            <person name="Revuelta J.L."/>
            <person name="Moreno S."/>
            <person name="Armstrong J."/>
            <person name="Forsburg S.L."/>
            <person name="Cerutti L."/>
            <person name="Lowe T."/>
            <person name="McCombie W.R."/>
            <person name="Paulsen I."/>
            <person name="Potashkin J."/>
            <person name="Shpakovski G.V."/>
            <person name="Ussery D."/>
            <person name="Barrell B.G."/>
            <person name="Nurse P."/>
        </authorList>
    </citation>
    <scope>NUCLEOTIDE SEQUENCE [LARGE SCALE GENOMIC DNA]</scope>
    <source>
        <strain>972 / ATCC 24843</strain>
    </source>
</reference>
<reference key="2">
    <citation type="journal article" date="2005" name="Mol. Biol. Cell">
        <title>Characterization of Schizosaccharomyces pombe ER alpha-mannosidase: a reevaluation of the role of the enzyme on ER-associated degradation.</title>
        <authorList>
            <person name="Movsichoff F."/>
            <person name="Castro O.A."/>
            <person name="Parodi A.J."/>
        </authorList>
    </citation>
    <scope>FUNCTION</scope>
</reference>
<proteinExistence type="inferred from homology"/>
<name>MNL1_SCHPO</name>
<dbReference type="EMBL" id="CU329670">
    <property type="protein sequence ID" value="CAA16978.2"/>
    <property type="molecule type" value="Genomic_DNA"/>
</dbReference>
<dbReference type="PIR" id="T38224">
    <property type="entry name" value="T38224"/>
</dbReference>
<dbReference type="RefSeq" id="NP_594434.1">
    <property type="nucleotide sequence ID" value="NM_001019863.2"/>
</dbReference>
<dbReference type="SMR" id="O94726"/>
<dbReference type="BioGRID" id="278466">
    <property type="interactions" value="3"/>
</dbReference>
<dbReference type="FunCoup" id="O94726">
    <property type="interactions" value="397"/>
</dbReference>
<dbReference type="STRING" id="284812.O94726"/>
<dbReference type="CAZy" id="GH47">
    <property type="family name" value="Glycoside Hydrolase Family 47"/>
</dbReference>
<dbReference type="GlyCosmos" id="O94726">
    <property type="glycosylation" value="5 sites, No reported glycans"/>
</dbReference>
<dbReference type="iPTMnet" id="O94726"/>
<dbReference type="PaxDb" id="4896-SPAC23A1.04c.1"/>
<dbReference type="EnsemblFungi" id="SPAC23A1.04c.1">
    <property type="protein sequence ID" value="SPAC23A1.04c.1:pep"/>
    <property type="gene ID" value="SPAC23A1.04c"/>
</dbReference>
<dbReference type="GeneID" id="2541981"/>
<dbReference type="KEGG" id="spo:2541981"/>
<dbReference type="PomBase" id="SPAC23A1.04c">
    <property type="gene designation" value="mnl1"/>
</dbReference>
<dbReference type="VEuPathDB" id="FungiDB:SPAC23A1.04c"/>
<dbReference type="eggNOG" id="KOG2429">
    <property type="taxonomic scope" value="Eukaryota"/>
</dbReference>
<dbReference type="HOGENOM" id="CLU_003818_2_1_1"/>
<dbReference type="InParanoid" id="O94726"/>
<dbReference type="OMA" id="INLMKGV"/>
<dbReference type="PhylomeDB" id="O94726"/>
<dbReference type="PRO" id="PR:O94726"/>
<dbReference type="Proteomes" id="UP000002485">
    <property type="component" value="Chromosome I"/>
</dbReference>
<dbReference type="GO" id="GO:0005829">
    <property type="term" value="C:cytosol"/>
    <property type="evidence" value="ECO:0007005"/>
    <property type="project" value="PomBase"/>
</dbReference>
<dbReference type="GO" id="GO:0005783">
    <property type="term" value="C:endoplasmic reticulum"/>
    <property type="evidence" value="ECO:0000266"/>
    <property type="project" value="PomBase"/>
</dbReference>
<dbReference type="GO" id="GO:0005788">
    <property type="term" value="C:endoplasmic reticulum lumen"/>
    <property type="evidence" value="ECO:0007669"/>
    <property type="project" value="UniProtKB-SubCell"/>
</dbReference>
<dbReference type="GO" id="GO:0044322">
    <property type="term" value="C:endoplasmic reticulum quality control compartment"/>
    <property type="evidence" value="ECO:0007669"/>
    <property type="project" value="GOC"/>
</dbReference>
<dbReference type="GO" id="GO:0016020">
    <property type="term" value="C:membrane"/>
    <property type="evidence" value="ECO:0007669"/>
    <property type="project" value="InterPro"/>
</dbReference>
<dbReference type="GO" id="GO:0005509">
    <property type="term" value="F:calcium ion binding"/>
    <property type="evidence" value="ECO:0007669"/>
    <property type="project" value="InterPro"/>
</dbReference>
<dbReference type="GO" id="GO:0030246">
    <property type="term" value="F:carbohydrate binding"/>
    <property type="evidence" value="ECO:0000266"/>
    <property type="project" value="PomBase"/>
</dbReference>
<dbReference type="GO" id="GO:0005975">
    <property type="term" value="P:carbohydrate metabolic process"/>
    <property type="evidence" value="ECO:0007669"/>
    <property type="project" value="InterPro"/>
</dbReference>
<dbReference type="GO" id="GO:1904380">
    <property type="term" value="P:endoplasmic reticulum mannose trimming"/>
    <property type="evidence" value="ECO:0007669"/>
    <property type="project" value="InterPro"/>
</dbReference>
<dbReference type="GO" id="GO:0006986">
    <property type="term" value="P:response to unfolded protein"/>
    <property type="evidence" value="ECO:0007669"/>
    <property type="project" value="UniProtKB-KW"/>
</dbReference>
<dbReference type="GO" id="GO:0097466">
    <property type="term" value="P:ubiquitin-dependent glycoprotein ERAD pathway"/>
    <property type="evidence" value="ECO:0000315"/>
    <property type="project" value="PomBase"/>
</dbReference>
<dbReference type="Gene3D" id="1.50.10.10">
    <property type="match status" value="1"/>
</dbReference>
<dbReference type="InterPro" id="IPR012341">
    <property type="entry name" value="6hp_glycosidase-like_sf"/>
</dbReference>
<dbReference type="InterPro" id="IPR044674">
    <property type="entry name" value="EDEM1/2/3"/>
</dbReference>
<dbReference type="InterPro" id="IPR001382">
    <property type="entry name" value="Glyco_hydro_47"/>
</dbReference>
<dbReference type="InterPro" id="IPR036026">
    <property type="entry name" value="Seven-hairpin_glycosidases"/>
</dbReference>
<dbReference type="PANTHER" id="PTHR45679:SF5">
    <property type="entry name" value="ER DEGRADATION-ENHANCING ALPHA-MANNOSIDASE-LIKE PROTEIN 1"/>
    <property type="match status" value="1"/>
</dbReference>
<dbReference type="PANTHER" id="PTHR45679">
    <property type="entry name" value="ER DEGRADATION-ENHANCING ALPHA-MANNOSIDASE-LIKE PROTEIN 2"/>
    <property type="match status" value="1"/>
</dbReference>
<dbReference type="Pfam" id="PF01532">
    <property type="entry name" value="Glyco_hydro_47"/>
    <property type="match status" value="1"/>
</dbReference>
<dbReference type="PRINTS" id="PR00747">
    <property type="entry name" value="GLYHDRLASE47"/>
</dbReference>
<dbReference type="SUPFAM" id="SSF48225">
    <property type="entry name" value="Seven-hairpin glycosidases"/>
    <property type="match status" value="1"/>
</dbReference>
<keyword id="KW-0256">Endoplasmic reticulum</keyword>
<keyword id="KW-0325">Glycoprotein</keyword>
<keyword id="KW-1185">Reference proteome</keyword>
<keyword id="KW-0732">Signal</keyword>
<keyword id="KW-0834">Unfolded protein response</keyword>
<gene>
    <name type="primary">mnl1</name>
    <name type="ORF">SPAC23A1.04c</name>
</gene>
<protein>
    <recommendedName>
        <fullName>ER degradation-enhancing alpha-mannosidase-like protein 1</fullName>
    </recommendedName>
</protein>